<feature type="chain" id="PRO_0000461069" description="Isocitrate dehydrogenase [NADP] 2">
    <location>
        <begin position="1"/>
        <end position="740"/>
    </location>
</feature>
<feature type="binding site" evidence="1">
    <location>
        <position position="83"/>
    </location>
    <ligand>
        <name>NADP(+)</name>
        <dbReference type="ChEBI" id="CHEBI:58349"/>
    </ligand>
</feature>
<feature type="binding site" evidence="1">
    <location>
        <position position="85"/>
    </location>
    <ligand>
        <name>NADP(+)</name>
        <dbReference type="ChEBI" id="CHEBI:58349"/>
    </ligand>
</feature>
<feature type="binding site" evidence="1">
    <location>
        <position position="130"/>
    </location>
    <ligand>
        <name>D-threo-isocitrate</name>
        <dbReference type="ChEBI" id="CHEBI:15562"/>
    </ligand>
</feature>
<feature type="binding site" evidence="1">
    <location>
        <position position="133"/>
    </location>
    <ligand>
        <name>D-threo-isocitrate</name>
        <dbReference type="ChEBI" id="CHEBI:15562"/>
    </ligand>
</feature>
<feature type="binding site" evidence="1">
    <location>
        <position position="133"/>
    </location>
    <ligand>
        <name>NADP(+)</name>
        <dbReference type="ChEBI" id="CHEBI:58349"/>
    </ligand>
</feature>
<feature type="binding site" evidence="1">
    <location>
        <position position="137"/>
    </location>
    <ligand>
        <name>D-threo-isocitrate</name>
        <dbReference type="ChEBI" id="CHEBI:15562"/>
    </ligand>
</feature>
<feature type="binding site" evidence="1">
    <location>
        <position position="143"/>
    </location>
    <ligand>
        <name>D-threo-isocitrate</name>
        <dbReference type="ChEBI" id="CHEBI:15562"/>
    </ligand>
</feature>
<feature type="binding site" evidence="1">
    <location>
        <position position="253"/>
    </location>
    <ligand>
        <name>D-threo-isocitrate</name>
        <dbReference type="ChEBI" id="CHEBI:15562"/>
    </ligand>
</feature>
<feature type="binding site" evidence="2">
    <location>
        <position position="348"/>
    </location>
    <ligand>
        <name>Mg(2+)</name>
        <dbReference type="ChEBI" id="CHEBI:18420"/>
    </ligand>
</feature>
<feature type="binding site" evidence="1">
    <location>
        <position position="418"/>
    </location>
    <ligand>
        <name>D-threo-isocitrate</name>
        <dbReference type="ChEBI" id="CHEBI:15562"/>
    </ligand>
</feature>
<feature type="binding site" evidence="1">
    <location>
        <position position="546"/>
    </location>
    <ligand>
        <name>D-threo-isocitrate</name>
        <dbReference type="ChEBI" id="CHEBI:15562"/>
    </ligand>
</feature>
<feature type="binding site" evidence="2">
    <location>
        <position position="547"/>
    </location>
    <ligand>
        <name>Mg(2+)</name>
        <dbReference type="ChEBI" id="CHEBI:18420"/>
    </ligand>
</feature>
<feature type="binding site" evidence="2">
    <location>
        <position position="551"/>
    </location>
    <ligand>
        <name>Mg(2+)</name>
        <dbReference type="ChEBI" id="CHEBI:18420"/>
    </ligand>
</feature>
<feature type="binding site" evidence="1">
    <location>
        <position position="584"/>
    </location>
    <ligand>
        <name>NADP(+)</name>
        <dbReference type="ChEBI" id="CHEBI:58349"/>
    </ligand>
</feature>
<feature type="binding site" evidence="1">
    <location>
        <position position="588"/>
    </location>
    <ligand>
        <name>NADP(+)</name>
        <dbReference type="ChEBI" id="CHEBI:58349"/>
    </ligand>
</feature>
<feature type="binding site" evidence="1">
    <location>
        <position position="599"/>
    </location>
    <ligand>
        <name>NADP(+)</name>
        <dbReference type="ChEBI" id="CHEBI:58349"/>
    </ligand>
</feature>
<feature type="binding site" evidence="1">
    <location>
        <position position="601"/>
    </location>
    <ligand>
        <name>NADP(+)</name>
        <dbReference type="ChEBI" id="CHEBI:58349"/>
    </ligand>
</feature>
<feature type="binding site" evidence="1">
    <location>
        <position position="648"/>
    </location>
    <ligand>
        <name>NADP(+)</name>
        <dbReference type="ChEBI" id="CHEBI:58349"/>
    </ligand>
</feature>
<name>IDH2_PSYS3</name>
<keyword id="KW-0329">Glyoxylate bypass</keyword>
<keyword id="KW-0460">Magnesium</keyword>
<keyword id="KW-0464">Manganese</keyword>
<keyword id="KW-0479">Metal-binding</keyword>
<keyword id="KW-0521">NADP</keyword>
<keyword id="KW-0560">Oxidoreductase</keyword>
<keyword id="KW-0816">Tricarboxylic acid cycle</keyword>
<comment type="function">
    <text evidence="3">Catalyzes the oxidative decarboxylation of isocitrate to 2-oxoglutarate and carbon dioxide with the concomitant reduction of NADP(+) (PubMed:34101864). Cannot use NAD(+) (PubMed:34101864).</text>
</comment>
<comment type="catalytic activity">
    <reaction evidence="3">
        <text>D-threo-isocitrate + NADP(+) = 2-oxoglutarate + CO2 + NADPH</text>
        <dbReference type="Rhea" id="RHEA:19629"/>
        <dbReference type="ChEBI" id="CHEBI:15562"/>
        <dbReference type="ChEBI" id="CHEBI:16526"/>
        <dbReference type="ChEBI" id="CHEBI:16810"/>
        <dbReference type="ChEBI" id="CHEBI:57783"/>
        <dbReference type="ChEBI" id="CHEBI:58349"/>
        <dbReference type="EC" id="1.1.1.42"/>
    </reaction>
</comment>
<comment type="cofactor">
    <cofactor evidence="2">
        <name>Mg(2+)</name>
        <dbReference type="ChEBI" id="CHEBI:18420"/>
    </cofactor>
    <cofactor evidence="3">
        <name>Mn(2+)</name>
        <dbReference type="ChEBI" id="CHEBI:29035"/>
    </cofactor>
    <text evidence="2 3">Binds 1 Mg(2+) or Mn(2+) ion per subunit (By similarity). Mn(2+) is the most effective divalent cation in vitro, but the enzyme can also use Mg(2+), Co(2+) and Zn(2+), with lower efficiency (PubMed:34101864).</text>
</comment>
<comment type="activity regulation">
    <text evidence="3">IDH activity is not significantly affected by monovalent cations (PubMed:34101864). The combined addition of Mn(2+) and another divalent cation results in the decrease of the activity (PubMed:34101864).</text>
</comment>
<comment type="biophysicochemical properties">
    <phDependence>
        <text evidence="3">Optimum pH is 7.0.</text>
    </phDependence>
    <temperatureDependence>
        <text evidence="3">Optimum temperature is 45 degrees Celsius (PubMed:34101864). Retains about 60% of its maximum activity after incubation for 10 min at 40 degrees Celsius, but completely loses its activity by incubation at 50 degrees Celsius (PubMed:34101864).</text>
    </temperatureDependence>
</comment>
<comment type="subunit">
    <text evidence="3">Monomer.</text>
</comment>
<comment type="induction">
    <text evidence="3">Expression is weakly induced at 30 degrees Celsius, the optimum growth temperature of the strain 13A.</text>
</comment>
<comment type="similarity">
    <text evidence="5">Belongs to the monomeric-type IDH family.</text>
</comment>
<dbReference type="EC" id="1.1.1.42" evidence="3"/>
<dbReference type="EMBL" id="LC498640">
    <property type="protein sequence ID" value="BBN50996.1"/>
    <property type="molecule type" value="Genomic_DNA"/>
</dbReference>
<dbReference type="SMR" id="A0A5A4WIZ7"/>
<dbReference type="GO" id="GO:0004450">
    <property type="term" value="F:isocitrate dehydrogenase (NADP+) activity"/>
    <property type="evidence" value="ECO:0007669"/>
    <property type="project" value="UniProtKB-EC"/>
</dbReference>
<dbReference type="GO" id="GO:0046872">
    <property type="term" value="F:metal ion binding"/>
    <property type="evidence" value="ECO:0007669"/>
    <property type="project" value="UniProtKB-KW"/>
</dbReference>
<dbReference type="GO" id="GO:0006097">
    <property type="term" value="P:glyoxylate cycle"/>
    <property type="evidence" value="ECO:0007669"/>
    <property type="project" value="UniProtKB-KW"/>
</dbReference>
<dbReference type="GO" id="GO:0006099">
    <property type="term" value="P:tricarboxylic acid cycle"/>
    <property type="evidence" value="ECO:0007669"/>
    <property type="project" value="UniProtKB-KW"/>
</dbReference>
<dbReference type="Gene3D" id="3.40.718.10">
    <property type="entry name" value="Isopropylmalate Dehydrogenase"/>
    <property type="match status" value="1"/>
</dbReference>
<dbReference type="InterPro" id="IPR004436">
    <property type="entry name" value="Isocitrate_DH_NADP_mono"/>
</dbReference>
<dbReference type="NCBIfam" id="TIGR00178">
    <property type="entry name" value="monomer_idh"/>
    <property type="match status" value="1"/>
</dbReference>
<dbReference type="PANTHER" id="PTHR36999:SF1">
    <property type="entry name" value="ISOCITRATE DEHYDROGENASE (NADP(+))"/>
    <property type="match status" value="1"/>
</dbReference>
<dbReference type="PANTHER" id="PTHR36999">
    <property type="entry name" value="ISOCITRATE DEHYDROGENASE [NADP]"/>
    <property type="match status" value="1"/>
</dbReference>
<dbReference type="Pfam" id="PF03971">
    <property type="entry name" value="IDH"/>
    <property type="match status" value="1"/>
</dbReference>
<dbReference type="PIRSF" id="PIRSF009407">
    <property type="entry name" value="IDH_monmr"/>
    <property type="match status" value="1"/>
</dbReference>
<dbReference type="SUPFAM" id="SSF53659">
    <property type="entry name" value="Isocitrate/Isopropylmalate dehydrogenase-like"/>
    <property type="match status" value="1"/>
</dbReference>
<evidence type="ECO:0000250" key="1">
    <source>
        <dbReference type="UniProtKB" id="P16100"/>
    </source>
</evidence>
<evidence type="ECO:0000250" key="2">
    <source>
        <dbReference type="UniProtKB" id="P50216"/>
    </source>
</evidence>
<evidence type="ECO:0000269" key="3">
    <source>
    </source>
</evidence>
<evidence type="ECO:0000303" key="4">
    <source>
    </source>
</evidence>
<evidence type="ECO:0000305" key="5"/>
<proteinExistence type="evidence at protein level"/>
<reference key="1">
    <citation type="journal article" date="2021" name="J. Basic Microbiol.">
        <title>NADP+ -dependent isocitrate dehydrogenase isozymes from a psychrotrophic bacterium, Psychrobacter sp. strain 13A.</title>
        <authorList>
            <person name="Komura T."/>
            <person name="Takada Y."/>
        </authorList>
    </citation>
    <scope>NUCLEOTIDE SEQUENCE [GENOMIC DNA]</scope>
    <scope>FUNCTION</scope>
    <scope>CATALYTIC ACTIVITY</scope>
    <scope>COFACTOR</scope>
    <scope>ACTIVITY REGULATION</scope>
    <scope>BIOPHYSICOCHEMICAL PROPERTIES</scope>
    <scope>SUBUNIT</scope>
    <scope>INDUCTION</scope>
    <source>
        <strain>13A</strain>
    </source>
</reference>
<accession>A0A5A4WIZ7</accession>
<sequence>MSKIIYTKTDEAPALATLSFLPIVKAFAQTAGVDVETSDISVAARVLAEFPEYLTEEQRVPNNLEALGKLTQDPNANIIKLPNISASVQQLKAAIKELQGKGYAIPDFPDEPKNAEEEEIRRRYGKSLGSSVNPVLREGNSDRRAPKAVKNYARKHPHSMGEWKQWSQTHVSHMHSGDFYDGEQSMTLDKARTVRMELLLEDGTTKVLKPKIALLDKEVIDLMFMSKKALLEFYEREMEDCREAGILFSLHVKATMMKVSHPIVFGHAVRIYYKDAFQKHGALFDELGINVNNGMASLYEKITELPASLREEIERDLHACQVHRPRLAMVDSSKGITNFHSPSDVIVDASMPAMIRNGGKMWGADGKLYDCKAVMPESTFARIYQEMINFCKWHGNFDPTTMGTVPNVGLMAQKAEEYGSHDKTFESSDNGIARIVDIDSGEVLLEQRVEKGDIWRMCQTKDDPIQDWVKLAVRRARESDTPVIFWLDPYRPHENELIKKVKTYLKDHDTNGLHIEIMSQVRAMRYTLERVARGLDTISATGNILRDYLTDLFPILELGTSAKMLSVVPLMKGGGLFETGAGGSAPKHVQQLIEENHLRWDSLGEFLALTESLEHLAKNDDNAKAKVLADALDRATETLLLNDKSPSRKTGELDNRGSHFYLAKYWAEELAAQDENSELKAQFAPLAQKLEENEAAIVEQLNEVQGKSMDLKGYYLADEALAEKAMRPSPLFNEAIASLS</sequence>
<organism>
    <name type="scientific">Psychrobacter sp. (strain 13A)</name>
    <dbReference type="NCBI Taxonomy" id="2607668"/>
    <lineage>
        <taxon>Bacteria</taxon>
        <taxon>Pseudomonadati</taxon>
        <taxon>Pseudomonadota</taxon>
        <taxon>Gammaproteobacteria</taxon>
        <taxon>Moraxellales</taxon>
        <taxon>Moraxellaceae</taxon>
        <taxon>Psychrobacter</taxon>
    </lineage>
</organism>
<gene>
    <name evidence="4" type="primary">13AIDH-M</name>
</gene>
<protein>
    <recommendedName>
        <fullName evidence="5">Isocitrate dehydrogenase [NADP] 2</fullName>
        <shortName evidence="4">IDH 2</shortName>
        <ecNumber evidence="3">1.1.1.42</ecNumber>
    </recommendedName>
</protein>